<reference key="1">
    <citation type="journal article" date="1990" name="J. Bacteriol.">
        <title>Nucleotide sequence analysis of the Leptospira biflexa serovar patoc rpsL and rpsG genes.</title>
        <authorList>
            <person name="Zuerner R.L."/>
            <person name="Charon N.W."/>
        </authorList>
    </citation>
    <scope>NUCLEOTIDE SEQUENCE [GENOMIC DNA]</scope>
    <source>
        <strain>Patoc I / Serovar Patoc</strain>
    </source>
</reference>
<reference key="2">
    <citation type="journal article" date="2001" name="FEMS Microbiol. Lett.">
        <title>First evidence for a restriction-modification system in Leptospira sp.</title>
        <authorList>
            <person name="Brenot A."/>
            <person name="Werts C."/>
            <person name="Ottone C."/>
            <person name="Sertour N."/>
            <person name="Charon N.W."/>
            <person name="Postic D."/>
            <person name="Baranton G."/>
            <person name="Saint Girons I."/>
        </authorList>
    </citation>
    <scope>NUCLEOTIDE SEQUENCE [GENOMIC DNA]</scope>
    <source>
        <strain>Patoc I / Serovar patoc / PITAL</strain>
    </source>
</reference>
<feature type="chain" id="PRO_0000146248" description="Small ribosomal subunit protein uS12">
    <location>
        <begin position="1"/>
        <end position="124"/>
    </location>
</feature>
<feature type="modified residue" description="3-methylthioaspartic acid" evidence="1">
    <location>
        <position position="89"/>
    </location>
</feature>
<evidence type="ECO:0000250" key="1"/>
<evidence type="ECO:0000305" key="2"/>
<dbReference type="EMBL" id="M57776">
    <property type="protein sequence ID" value="AAA63276.1"/>
    <property type="molecule type" value="Genomic_DNA"/>
</dbReference>
<dbReference type="EMBL" id="AJ310918">
    <property type="protein sequence ID" value="CAC44029.1"/>
    <property type="molecule type" value="Genomic_DNA"/>
</dbReference>
<dbReference type="RefSeq" id="WP_004783543.1">
    <property type="nucleotide sequence ID" value="NZ_RQHE01000004.1"/>
</dbReference>
<dbReference type="SMR" id="P63198"/>
<dbReference type="GeneID" id="93343082"/>
<dbReference type="OMA" id="VCIRVYT"/>
<dbReference type="GO" id="GO:0015935">
    <property type="term" value="C:small ribosomal subunit"/>
    <property type="evidence" value="ECO:0007669"/>
    <property type="project" value="InterPro"/>
</dbReference>
<dbReference type="GO" id="GO:0019843">
    <property type="term" value="F:rRNA binding"/>
    <property type="evidence" value="ECO:0007669"/>
    <property type="project" value="UniProtKB-UniRule"/>
</dbReference>
<dbReference type="GO" id="GO:0003735">
    <property type="term" value="F:structural constituent of ribosome"/>
    <property type="evidence" value="ECO:0007669"/>
    <property type="project" value="InterPro"/>
</dbReference>
<dbReference type="GO" id="GO:0000049">
    <property type="term" value="F:tRNA binding"/>
    <property type="evidence" value="ECO:0007669"/>
    <property type="project" value="UniProtKB-UniRule"/>
</dbReference>
<dbReference type="GO" id="GO:0006412">
    <property type="term" value="P:translation"/>
    <property type="evidence" value="ECO:0007669"/>
    <property type="project" value="UniProtKB-UniRule"/>
</dbReference>
<dbReference type="CDD" id="cd03368">
    <property type="entry name" value="Ribosomal_S12"/>
    <property type="match status" value="1"/>
</dbReference>
<dbReference type="FunFam" id="2.40.50.140:FF:000001">
    <property type="entry name" value="30S ribosomal protein S12"/>
    <property type="match status" value="1"/>
</dbReference>
<dbReference type="Gene3D" id="2.40.50.140">
    <property type="entry name" value="Nucleic acid-binding proteins"/>
    <property type="match status" value="1"/>
</dbReference>
<dbReference type="HAMAP" id="MF_00403_B">
    <property type="entry name" value="Ribosomal_uS12_B"/>
    <property type="match status" value="1"/>
</dbReference>
<dbReference type="InterPro" id="IPR012340">
    <property type="entry name" value="NA-bd_OB-fold"/>
</dbReference>
<dbReference type="InterPro" id="IPR006032">
    <property type="entry name" value="Ribosomal_uS12"/>
</dbReference>
<dbReference type="InterPro" id="IPR005679">
    <property type="entry name" value="Ribosomal_uS12_bac"/>
</dbReference>
<dbReference type="NCBIfam" id="TIGR00981">
    <property type="entry name" value="rpsL_bact"/>
    <property type="match status" value="1"/>
</dbReference>
<dbReference type="PANTHER" id="PTHR11652">
    <property type="entry name" value="30S RIBOSOMAL PROTEIN S12 FAMILY MEMBER"/>
    <property type="match status" value="1"/>
</dbReference>
<dbReference type="Pfam" id="PF00164">
    <property type="entry name" value="Ribosom_S12_S23"/>
    <property type="match status" value="1"/>
</dbReference>
<dbReference type="PIRSF" id="PIRSF002133">
    <property type="entry name" value="Ribosomal_S12/S23"/>
    <property type="match status" value="1"/>
</dbReference>
<dbReference type="PRINTS" id="PR01034">
    <property type="entry name" value="RIBOSOMALS12"/>
</dbReference>
<dbReference type="SUPFAM" id="SSF50249">
    <property type="entry name" value="Nucleic acid-binding proteins"/>
    <property type="match status" value="1"/>
</dbReference>
<dbReference type="PROSITE" id="PS00055">
    <property type="entry name" value="RIBOSOMAL_S12"/>
    <property type="match status" value="1"/>
</dbReference>
<comment type="function">
    <text evidence="1">With S4 and S5 plays an important role in translational accuracy.</text>
</comment>
<comment type="function">
    <text evidence="1">Interacts with and stabilizes bases of the 16S rRNA that are involved in tRNA selection in the A site and with the mRNA backbone. Located at the interface of the 30S and 50S subunits, it traverses the body of the 30S subunit contacting proteins on the other side and probably holding the rRNA structure together. The combined cluster of proteins S8, S12 and S17 appears to hold together the shoulder and platform of the 30S subunit (By similarity).</text>
</comment>
<comment type="subunit">
    <text evidence="1">Part of the 30S ribosomal subunit. Contacts proteins S8 and S17. May interact with IF1 in the 30S initiation complex (By similarity).</text>
</comment>
<comment type="similarity">
    <text evidence="2">Belongs to the universal ribosomal protein uS12 family.</text>
</comment>
<keyword id="KW-0488">Methylation</keyword>
<keyword id="KW-0687">Ribonucleoprotein</keyword>
<keyword id="KW-0689">Ribosomal protein</keyword>
<keyword id="KW-0694">RNA-binding</keyword>
<keyword id="KW-0699">rRNA-binding</keyword>
<keyword id="KW-0820">tRNA-binding</keyword>
<sequence length="124" mass="13948">MPTINQLIRIGREDQKKRTKSPALKACPQRRGVCTRVMTFTPKKPNSALRKVARVRLTTGIEVTAYIPGEGHNLQEHNVVLIRGGRVKDLPGVRYHIIRGTLDTLGVDKRRKGRSKYGAKRPKA</sequence>
<name>RS12_LEPBI</name>
<gene>
    <name type="primary">rpsL</name>
</gene>
<protein>
    <recommendedName>
        <fullName evidence="2">Small ribosomal subunit protein uS12</fullName>
    </recommendedName>
    <alternativeName>
        <fullName>30S ribosomal protein S12</fullName>
    </alternativeName>
</protein>
<accession>P63198</accession>
<accession>P20820</accession>
<accession>P63197</accession>
<proteinExistence type="inferred from homology"/>
<organism>
    <name type="scientific">Leptospira biflexa</name>
    <dbReference type="NCBI Taxonomy" id="172"/>
    <lineage>
        <taxon>Bacteria</taxon>
        <taxon>Pseudomonadati</taxon>
        <taxon>Spirochaetota</taxon>
        <taxon>Spirochaetia</taxon>
        <taxon>Leptospirales</taxon>
        <taxon>Leptospiraceae</taxon>
        <taxon>Leptospira</taxon>
    </lineage>
</organism>